<dbReference type="EC" id="3.4.22.-"/>
<dbReference type="EMBL" id="EF626931">
    <property type="protein sequence ID" value="ABV00958.1"/>
    <property type="molecule type" value="Genomic_DNA"/>
</dbReference>
<dbReference type="EMBL" id="CP017625">
    <property type="protein sequence ID" value="AOW28534.1"/>
    <property type="molecule type" value="Genomic_DNA"/>
</dbReference>
<dbReference type="RefSeq" id="XP_723205.1">
    <property type="nucleotide sequence ID" value="XM_718112.1"/>
</dbReference>
<dbReference type="SMR" id="Q5ANA8"/>
<dbReference type="FunCoup" id="Q5ANA8">
    <property type="interactions" value="384"/>
</dbReference>
<dbReference type="STRING" id="237561.Q5ANA8"/>
<dbReference type="EnsemblFungi" id="C3_05190C_A-T">
    <property type="protein sequence ID" value="C3_05190C_A-T-p1"/>
    <property type="gene ID" value="C3_05190C_A"/>
</dbReference>
<dbReference type="GeneID" id="3635233"/>
<dbReference type="KEGG" id="cal:CAALFM_C305190CA"/>
<dbReference type="CGD" id="CAL0000184470">
    <property type="gene designation" value="MCA1"/>
</dbReference>
<dbReference type="VEuPathDB" id="FungiDB:C3_05190C_A"/>
<dbReference type="eggNOG" id="KOG1546">
    <property type="taxonomic scope" value="Eukaryota"/>
</dbReference>
<dbReference type="HOGENOM" id="CLU_029389_0_1_1"/>
<dbReference type="InParanoid" id="Q5ANA8"/>
<dbReference type="OMA" id="IRMALQW"/>
<dbReference type="OrthoDB" id="3223806at2759"/>
<dbReference type="PHI-base" id="PHI:11760"/>
<dbReference type="PHI-base" id="PHI:6795"/>
<dbReference type="PRO" id="PR:Q5ANA8"/>
<dbReference type="Proteomes" id="UP000000559">
    <property type="component" value="Chromosome 3"/>
</dbReference>
<dbReference type="GO" id="GO:0005737">
    <property type="term" value="C:cytoplasm"/>
    <property type="evidence" value="ECO:0000318"/>
    <property type="project" value="GO_Central"/>
</dbReference>
<dbReference type="GO" id="GO:0004197">
    <property type="term" value="F:cysteine-type endopeptidase activity"/>
    <property type="evidence" value="ECO:0000314"/>
    <property type="project" value="CGD"/>
</dbReference>
<dbReference type="GO" id="GO:0006915">
    <property type="term" value="P:apoptotic process"/>
    <property type="evidence" value="ECO:0000315"/>
    <property type="project" value="CGD"/>
</dbReference>
<dbReference type="GO" id="GO:0006508">
    <property type="term" value="P:proteolysis"/>
    <property type="evidence" value="ECO:0000318"/>
    <property type="project" value="GO_Central"/>
</dbReference>
<dbReference type="Gene3D" id="3.40.50.12660">
    <property type="match status" value="1"/>
</dbReference>
<dbReference type="InterPro" id="IPR029030">
    <property type="entry name" value="Caspase-like_dom_sf"/>
</dbReference>
<dbReference type="InterPro" id="IPR050452">
    <property type="entry name" value="Metacaspase"/>
</dbReference>
<dbReference type="InterPro" id="IPR011600">
    <property type="entry name" value="Pept_C14_caspase"/>
</dbReference>
<dbReference type="PANTHER" id="PTHR48104:SF30">
    <property type="entry name" value="METACASPASE-1"/>
    <property type="match status" value="1"/>
</dbReference>
<dbReference type="PANTHER" id="PTHR48104">
    <property type="entry name" value="METACASPASE-4"/>
    <property type="match status" value="1"/>
</dbReference>
<dbReference type="Pfam" id="PF00656">
    <property type="entry name" value="Peptidase_C14"/>
    <property type="match status" value="1"/>
</dbReference>
<dbReference type="SUPFAM" id="SSF52129">
    <property type="entry name" value="Caspase-like"/>
    <property type="match status" value="1"/>
</dbReference>
<gene>
    <name type="primary">MCA1</name>
    <name type="ordered locus">CAALFM_C305190CA</name>
    <name type="ORF">CaO19.13416</name>
    <name type="ORF">CaO19.5995</name>
</gene>
<comment type="function">
    <text evidence="1">Involved in cell death (apoptosis).</text>
</comment>
<comment type="similarity">
    <text evidence="4">Belongs to the peptidase C14B family.</text>
</comment>
<protein>
    <recommendedName>
        <fullName>Metacaspase-1</fullName>
        <ecNumber>3.4.22.-</ecNumber>
    </recommendedName>
</protein>
<name>MCA1_CANAL</name>
<reference key="1">
    <citation type="submission" date="2007-05" db="EMBL/GenBank/DDBJ databases">
        <title>Cloning and identification of a caspase-like gene from Candida albicans.</title>
        <authorList>
            <person name="Ni J."/>
            <person name="Mi Z."/>
            <person name="Yin J."/>
        </authorList>
    </citation>
    <scope>NUCLEOTIDE SEQUENCE [GENOMIC DNA]</scope>
</reference>
<reference key="2">
    <citation type="journal article" date="2004" name="Proc. Natl. Acad. Sci. U.S.A.">
        <title>The diploid genome sequence of Candida albicans.</title>
        <authorList>
            <person name="Jones T."/>
            <person name="Federspiel N.A."/>
            <person name="Chibana H."/>
            <person name="Dungan J."/>
            <person name="Kalman S."/>
            <person name="Magee B.B."/>
            <person name="Newport G."/>
            <person name="Thorstenson Y.R."/>
            <person name="Agabian N."/>
            <person name="Magee P.T."/>
            <person name="Davis R.W."/>
            <person name="Scherer S."/>
        </authorList>
    </citation>
    <scope>NUCLEOTIDE SEQUENCE [LARGE SCALE GENOMIC DNA]</scope>
    <source>
        <strain>SC5314 / ATCC MYA-2876</strain>
    </source>
</reference>
<reference key="3">
    <citation type="journal article" date="2007" name="Genome Biol.">
        <title>Assembly of the Candida albicans genome into sixteen supercontigs aligned on the eight chromosomes.</title>
        <authorList>
            <person name="van het Hoog M."/>
            <person name="Rast T.J."/>
            <person name="Martchenko M."/>
            <person name="Grindle S."/>
            <person name="Dignard D."/>
            <person name="Hogues H."/>
            <person name="Cuomo C."/>
            <person name="Berriman M."/>
            <person name="Scherer S."/>
            <person name="Magee B.B."/>
            <person name="Whiteway M."/>
            <person name="Chibana H."/>
            <person name="Nantel A."/>
            <person name="Magee P.T."/>
        </authorList>
    </citation>
    <scope>GENOME REANNOTATION</scope>
    <source>
        <strain>SC5314 / ATCC MYA-2876</strain>
    </source>
</reference>
<reference key="4">
    <citation type="journal article" date="2013" name="Genome Biol.">
        <title>Assembly of a phased diploid Candida albicans genome facilitates allele-specific measurements and provides a simple model for repeat and indel structure.</title>
        <authorList>
            <person name="Muzzey D."/>
            <person name="Schwartz K."/>
            <person name="Weissman J.S."/>
            <person name="Sherlock G."/>
        </authorList>
    </citation>
    <scope>NUCLEOTIDE SEQUENCE [LARGE SCALE GENOMIC DNA]</scope>
    <scope>GENOME REANNOTATION</scope>
    <source>
        <strain>SC5314 / ATCC MYA-2876</strain>
    </source>
</reference>
<sequence>MFPGQGRHTYGGQQSNYSNQQQGYDQGYNQGYGQAYGQEYNQGYDRPSGPPPGQGQYNRPSGPPPGPPPGQGQYNRPSGPPPSQQGQYNRPSGPPPGQYGNNQTRGSGNEQNYGNMHGSGHYSRPPTDSQSFGVENYNYQYSNCSGRKKALLIGINYIGTKNELRGPINDVNNVEQFLLANGYSSDNIVKLTDDQRVQRAIPTRQNILDAIQWLVKDARPNDALFFHYSGHGGQTEDQPDEYGNYDEDDGYDEVIYPLDFETNGFIIDDLLHTMMVKTLPQGCRLTALFDSCHSGSVLDLPYMYSTKGVLKEPNVMKEAGAGLLQSAMAYATGDRSRMLSGLGGVVKTFMNQGKAEKANEYSKQTNTAPCDAISLSGCKDDQTSADSKENGTATGAMSYAFLTVMSQNPNQSYLSLLQNMREILSAKYSQKPQLSASHPIDTNLQFIF</sequence>
<proteinExistence type="inferred from homology"/>
<feature type="propeptide" id="PRO_0000333638" evidence="2">
    <location>
        <begin position="1"/>
        <end status="unknown"/>
    </location>
</feature>
<feature type="chain" id="PRO_0000333639" description="Metacaspase-1">
    <location>
        <begin status="unknown"/>
        <end position="448"/>
    </location>
</feature>
<feature type="region of interest" description="Disordered" evidence="3">
    <location>
        <begin position="1"/>
        <end position="129"/>
    </location>
</feature>
<feature type="compositionally biased region" description="Low complexity" evidence="3">
    <location>
        <begin position="10"/>
        <end position="44"/>
    </location>
</feature>
<feature type="compositionally biased region" description="Pro residues" evidence="3">
    <location>
        <begin position="61"/>
        <end position="70"/>
    </location>
</feature>
<feature type="compositionally biased region" description="Polar residues" evidence="3">
    <location>
        <begin position="99"/>
        <end position="114"/>
    </location>
</feature>
<feature type="active site" evidence="1">
    <location>
        <position position="231"/>
    </location>
</feature>
<feature type="active site" evidence="1">
    <location>
        <position position="292"/>
    </location>
</feature>
<keyword id="KW-0053">Apoptosis</keyword>
<keyword id="KW-0378">Hydrolase</keyword>
<keyword id="KW-0645">Protease</keyword>
<keyword id="KW-1185">Reference proteome</keyword>
<keyword id="KW-0788">Thiol protease</keyword>
<keyword id="KW-0865">Zymogen</keyword>
<organism>
    <name type="scientific">Candida albicans (strain SC5314 / ATCC MYA-2876)</name>
    <name type="common">Yeast</name>
    <dbReference type="NCBI Taxonomy" id="237561"/>
    <lineage>
        <taxon>Eukaryota</taxon>
        <taxon>Fungi</taxon>
        <taxon>Dikarya</taxon>
        <taxon>Ascomycota</taxon>
        <taxon>Saccharomycotina</taxon>
        <taxon>Pichiomycetes</taxon>
        <taxon>Debaryomycetaceae</taxon>
        <taxon>Candida/Lodderomyces clade</taxon>
        <taxon>Candida</taxon>
    </lineage>
</organism>
<evidence type="ECO:0000250" key="1"/>
<evidence type="ECO:0000255" key="2"/>
<evidence type="ECO:0000256" key="3">
    <source>
        <dbReference type="SAM" id="MobiDB-lite"/>
    </source>
</evidence>
<evidence type="ECO:0000305" key="4"/>
<accession>Q5ANA8</accession>
<accession>A0A1D8PK73</accession>
<accession>B6C800</accession>